<reference key="1">
    <citation type="journal article" date="2010" name="PLoS ONE">
        <title>The complete multipartite genome sequence of Cupriavidus necator JMP134, a versatile pollutant degrader.</title>
        <authorList>
            <person name="Lykidis A."/>
            <person name="Perez-Pantoja D."/>
            <person name="Ledger T."/>
            <person name="Mavromatis K."/>
            <person name="Anderson I.J."/>
            <person name="Ivanova N.N."/>
            <person name="Hooper S.D."/>
            <person name="Lapidus A."/>
            <person name="Lucas S."/>
            <person name="Gonzalez B."/>
            <person name="Kyrpides N.C."/>
        </authorList>
    </citation>
    <scope>NUCLEOTIDE SEQUENCE [LARGE SCALE GENOMIC DNA]</scope>
    <source>
        <strain>JMP134 / LMG 1197</strain>
    </source>
</reference>
<evidence type="ECO:0000255" key="1">
    <source>
        <dbReference type="HAMAP-Rule" id="MF_01318"/>
    </source>
</evidence>
<evidence type="ECO:0000305" key="2"/>
<accession>Q46WD1</accession>
<proteinExistence type="inferred from homology"/>
<protein>
    <recommendedName>
        <fullName evidence="1">Large ribosomal subunit protein uL1</fullName>
    </recommendedName>
    <alternativeName>
        <fullName evidence="2">50S ribosomal protein L1</fullName>
    </alternativeName>
</protein>
<comment type="function">
    <text evidence="1">Binds directly to 23S rRNA. The L1 stalk is quite mobile in the ribosome, and is involved in E site tRNA release.</text>
</comment>
<comment type="function">
    <text evidence="1">Protein L1 is also a translational repressor protein, it controls the translation of the L11 operon by binding to its mRNA.</text>
</comment>
<comment type="subunit">
    <text evidence="1">Part of the 50S ribosomal subunit.</text>
</comment>
<comment type="similarity">
    <text evidence="1">Belongs to the universal ribosomal protein uL1 family.</text>
</comment>
<keyword id="KW-0678">Repressor</keyword>
<keyword id="KW-0687">Ribonucleoprotein</keyword>
<keyword id="KW-0689">Ribosomal protein</keyword>
<keyword id="KW-0694">RNA-binding</keyword>
<keyword id="KW-0699">rRNA-binding</keyword>
<keyword id="KW-0810">Translation regulation</keyword>
<keyword id="KW-0820">tRNA-binding</keyword>
<organism>
    <name type="scientific">Cupriavidus pinatubonensis (strain JMP 134 / LMG 1197)</name>
    <name type="common">Cupriavidus necator (strain JMP 134)</name>
    <dbReference type="NCBI Taxonomy" id="264198"/>
    <lineage>
        <taxon>Bacteria</taxon>
        <taxon>Pseudomonadati</taxon>
        <taxon>Pseudomonadota</taxon>
        <taxon>Betaproteobacteria</taxon>
        <taxon>Burkholderiales</taxon>
        <taxon>Burkholderiaceae</taxon>
        <taxon>Cupriavidus</taxon>
    </lineage>
</organism>
<gene>
    <name evidence="1" type="primary">rplA</name>
    <name type="ordered locus">Reut_A3192</name>
</gene>
<sequence>MAKVSKRVAANKAKIERTKFYPIDEALGLVKGCASAKFDESIDVAVQLGIDAKKSDQVVRGSVVLPAGTGKSVRVAVFAQGDKAEAAKAAGADIVGMEDLAEQVKAGNLNFDVVIASPDTMRIVGTLGQILGPRGLMPNPKVGTVTPDVAQAVKNAKAGQVQFRVDKAGIIHATIGRRSFEDTALKSNLAALLDALVKAKPATSKGVYLRKIAVSSTMGVGVRVEQASLSA</sequence>
<dbReference type="EMBL" id="CP000090">
    <property type="protein sequence ID" value="AAZ62552.1"/>
    <property type="molecule type" value="Genomic_DNA"/>
</dbReference>
<dbReference type="SMR" id="Q46WD1"/>
<dbReference type="STRING" id="264198.Reut_A3192"/>
<dbReference type="KEGG" id="reu:Reut_A3192"/>
<dbReference type="eggNOG" id="COG0081">
    <property type="taxonomic scope" value="Bacteria"/>
</dbReference>
<dbReference type="HOGENOM" id="CLU_062853_0_0_4"/>
<dbReference type="OrthoDB" id="9803740at2"/>
<dbReference type="GO" id="GO:0022625">
    <property type="term" value="C:cytosolic large ribosomal subunit"/>
    <property type="evidence" value="ECO:0007669"/>
    <property type="project" value="TreeGrafter"/>
</dbReference>
<dbReference type="GO" id="GO:0019843">
    <property type="term" value="F:rRNA binding"/>
    <property type="evidence" value="ECO:0007669"/>
    <property type="project" value="UniProtKB-UniRule"/>
</dbReference>
<dbReference type="GO" id="GO:0003735">
    <property type="term" value="F:structural constituent of ribosome"/>
    <property type="evidence" value="ECO:0007669"/>
    <property type="project" value="InterPro"/>
</dbReference>
<dbReference type="GO" id="GO:0000049">
    <property type="term" value="F:tRNA binding"/>
    <property type="evidence" value="ECO:0007669"/>
    <property type="project" value="UniProtKB-KW"/>
</dbReference>
<dbReference type="GO" id="GO:0006417">
    <property type="term" value="P:regulation of translation"/>
    <property type="evidence" value="ECO:0007669"/>
    <property type="project" value="UniProtKB-KW"/>
</dbReference>
<dbReference type="GO" id="GO:0006412">
    <property type="term" value="P:translation"/>
    <property type="evidence" value="ECO:0007669"/>
    <property type="project" value="UniProtKB-UniRule"/>
</dbReference>
<dbReference type="CDD" id="cd00403">
    <property type="entry name" value="Ribosomal_L1"/>
    <property type="match status" value="1"/>
</dbReference>
<dbReference type="FunFam" id="3.40.50.790:FF:000001">
    <property type="entry name" value="50S ribosomal protein L1"/>
    <property type="match status" value="1"/>
</dbReference>
<dbReference type="Gene3D" id="3.30.190.20">
    <property type="match status" value="1"/>
</dbReference>
<dbReference type="Gene3D" id="3.40.50.790">
    <property type="match status" value="1"/>
</dbReference>
<dbReference type="HAMAP" id="MF_01318_B">
    <property type="entry name" value="Ribosomal_uL1_B"/>
    <property type="match status" value="1"/>
</dbReference>
<dbReference type="InterPro" id="IPR005878">
    <property type="entry name" value="Ribosom_uL1_bac-type"/>
</dbReference>
<dbReference type="InterPro" id="IPR002143">
    <property type="entry name" value="Ribosomal_uL1"/>
</dbReference>
<dbReference type="InterPro" id="IPR023674">
    <property type="entry name" value="Ribosomal_uL1-like"/>
</dbReference>
<dbReference type="InterPro" id="IPR028364">
    <property type="entry name" value="Ribosomal_uL1/biogenesis"/>
</dbReference>
<dbReference type="InterPro" id="IPR016095">
    <property type="entry name" value="Ribosomal_uL1_3-a/b-sand"/>
</dbReference>
<dbReference type="InterPro" id="IPR023673">
    <property type="entry name" value="Ribosomal_uL1_CS"/>
</dbReference>
<dbReference type="NCBIfam" id="TIGR01169">
    <property type="entry name" value="rplA_bact"/>
    <property type="match status" value="1"/>
</dbReference>
<dbReference type="PANTHER" id="PTHR36427">
    <property type="entry name" value="54S RIBOSOMAL PROTEIN L1, MITOCHONDRIAL"/>
    <property type="match status" value="1"/>
</dbReference>
<dbReference type="PANTHER" id="PTHR36427:SF3">
    <property type="entry name" value="LARGE RIBOSOMAL SUBUNIT PROTEIN UL1M"/>
    <property type="match status" value="1"/>
</dbReference>
<dbReference type="Pfam" id="PF00687">
    <property type="entry name" value="Ribosomal_L1"/>
    <property type="match status" value="1"/>
</dbReference>
<dbReference type="PIRSF" id="PIRSF002155">
    <property type="entry name" value="Ribosomal_L1"/>
    <property type="match status" value="1"/>
</dbReference>
<dbReference type="SUPFAM" id="SSF56808">
    <property type="entry name" value="Ribosomal protein L1"/>
    <property type="match status" value="1"/>
</dbReference>
<dbReference type="PROSITE" id="PS01199">
    <property type="entry name" value="RIBOSOMAL_L1"/>
    <property type="match status" value="1"/>
</dbReference>
<feature type="chain" id="PRO_0000230631" description="Large ribosomal subunit protein uL1">
    <location>
        <begin position="1"/>
        <end position="231"/>
    </location>
</feature>
<name>RL1_CUPPJ</name>